<proteinExistence type="inferred from homology"/>
<feature type="chain" id="PRO_0000361120" description="Putative S-adenosyl-L-methionine-dependent methyltransferase MAB_0213c">
    <location>
        <begin position="1"/>
        <end position="303"/>
    </location>
</feature>
<feature type="binding site" evidence="1">
    <location>
        <position position="126"/>
    </location>
    <ligand>
        <name>S-adenosyl-L-methionine</name>
        <dbReference type="ChEBI" id="CHEBI:59789"/>
    </ligand>
</feature>
<feature type="binding site" evidence="1">
    <location>
        <begin position="155"/>
        <end position="156"/>
    </location>
    <ligand>
        <name>S-adenosyl-L-methionine</name>
        <dbReference type="ChEBI" id="CHEBI:59789"/>
    </ligand>
</feature>
<comment type="function">
    <text evidence="1">Exhibits S-adenosyl-L-methionine-dependent methyltransferase activity.</text>
</comment>
<comment type="similarity">
    <text evidence="2">Belongs to the UPF0677 family.</text>
</comment>
<organism>
    <name type="scientific">Mycobacteroides abscessus (strain ATCC 19977 / DSM 44196 / CCUG 20993 / CIP 104536 / JCM 13569 / NCTC 13031 / TMC 1543 / L948)</name>
    <name type="common">Mycobacterium abscessus</name>
    <dbReference type="NCBI Taxonomy" id="561007"/>
    <lineage>
        <taxon>Bacteria</taxon>
        <taxon>Bacillati</taxon>
        <taxon>Actinomycetota</taxon>
        <taxon>Actinomycetes</taxon>
        <taxon>Mycobacteriales</taxon>
        <taxon>Mycobacteriaceae</taxon>
        <taxon>Mycobacteroides</taxon>
        <taxon>Mycobacteroides abscessus</taxon>
    </lineage>
</organism>
<reference key="1">
    <citation type="journal article" date="2009" name="PLoS ONE">
        <title>Non mycobacterial virulence genes in the genome of the emerging pathogen Mycobacterium abscessus.</title>
        <authorList>
            <person name="Ripoll F."/>
            <person name="Pasek S."/>
            <person name="Schenowitz C."/>
            <person name="Dossat C."/>
            <person name="Barbe V."/>
            <person name="Rottman M."/>
            <person name="Macheras E."/>
            <person name="Heym B."/>
            <person name="Herrmann J.L."/>
            <person name="Daffe M."/>
            <person name="Brosch R."/>
            <person name="Risler J.L."/>
            <person name="Gaillard J.L."/>
        </authorList>
    </citation>
    <scope>NUCLEOTIDE SEQUENCE [LARGE SCALE GENOMIC DNA]</scope>
    <source>
        <strain>ATCC 19977 / DSM 44196 / CCUG 20993 / CIP 104536 / JCM 13569 / NCTC 13031 / TMC 1543 / L948</strain>
    </source>
</reference>
<gene>
    <name type="ordered locus">MAB_0213c</name>
</gene>
<name>Y213_MYCA9</name>
<sequence>MRTDTDTWDIQTSVGSTALAVAAGRALARHPANGAPIDPYAELFCRAAGGQWSDLVQGKQSDHALSSEDFGRSFANFQAARTAFFDNFFTTTSDTGVRQVVLLASGLDCRAYRLQWPAETEVYELDQPLVQQFKQETLDAHGAAPSAVRHPISVDLRQDWSTILQESGFDPSRPSAWLVEGLLFFLKSSAQDLLLETIDSLAAPGSHIAVEQRDTYPDIEFEMRRAAAADSAEPGGSPLADFLALIYNESRSEAATWLRGRGWAAERIALLDYMNTSGFELPAYSSVGWDTLRYTNMVTAAKR</sequence>
<dbReference type="EC" id="2.1.1.-"/>
<dbReference type="EMBL" id="CU458896">
    <property type="protein sequence ID" value="CAM60313.1"/>
    <property type="molecule type" value="Genomic_DNA"/>
</dbReference>
<dbReference type="RefSeq" id="WP_005112905.1">
    <property type="nucleotide sequence ID" value="NZ_MLCG01000005.1"/>
</dbReference>
<dbReference type="SMR" id="B1MEP9"/>
<dbReference type="GeneID" id="93377158"/>
<dbReference type="KEGG" id="mab:MAB_0213c"/>
<dbReference type="Proteomes" id="UP000007137">
    <property type="component" value="Chromosome"/>
</dbReference>
<dbReference type="GO" id="GO:0008168">
    <property type="term" value="F:methyltransferase activity"/>
    <property type="evidence" value="ECO:0007669"/>
    <property type="project" value="UniProtKB-KW"/>
</dbReference>
<dbReference type="GO" id="GO:0032259">
    <property type="term" value="P:methylation"/>
    <property type="evidence" value="ECO:0007669"/>
    <property type="project" value="UniProtKB-KW"/>
</dbReference>
<dbReference type="Gene3D" id="3.40.50.150">
    <property type="entry name" value="Vaccinia Virus protein VP39"/>
    <property type="match status" value="1"/>
</dbReference>
<dbReference type="InterPro" id="IPR007213">
    <property type="entry name" value="Ppm1/Ppm2/Tcmp"/>
</dbReference>
<dbReference type="InterPro" id="IPR029063">
    <property type="entry name" value="SAM-dependent_MTases_sf"/>
</dbReference>
<dbReference type="InterPro" id="IPR011610">
    <property type="entry name" value="SAM_mthyl_Trfase_ML2640-like"/>
</dbReference>
<dbReference type="NCBIfam" id="TIGR00027">
    <property type="entry name" value="mthyl_TIGR00027"/>
    <property type="match status" value="1"/>
</dbReference>
<dbReference type="PANTHER" id="PTHR43619">
    <property type="entry name" value="S-ADENOSYL-L-METHIONINE-DEPENDENT METHYLTRANSFERASE YKTD-RELATED"/>
    <property type="match status" value="1"/>
</dbReference>
<dbReference type="PANTHER" id="PTHR43619:SF2">
    <property type="entry name" value="S-ADENOSYL-L-METHIONINE-DEPENDENT METHYLTRANSFERASES SUPERFAMILY PROTEIN"/>
    <property type="match status" value="1"/>
</dbReference>
<dbReference type="Pfam" id="PF04072">
    <property type="entry name" value="LCM"/>
    <property type="match status" value="1"/>
</dbReference>
<dbReference type="SUPFAM" id="SSF53335">
    <property type="entry name" value="S-adenosyl-L-methionine-dependent methyltransferases"/>
    <property type="match status" value="1"/>
</dbReference>
<protein>
    <recommendedName>
        <fullName>Putative S-adenosyl-L-methionine-dependent methyltransferase MAB_0213c</fullName>
        <ecNumber>2.1.1.-</ecNumber>
    </recommendedName>
</protein>
<accession>B1MEP9</accession>
<evidence type="ECO:0000250" key="1"/>
<evidence type="ECO:0000305" key="2"/>
<keyword id="KW-0489">Methyltransferase</keyword>
<keyword id="KW-1185">Reference proteome</keyword>
<keyword id="KW-0949">S-adenosyl-L-methionine</keyword>
<keyword id="KW-0808">Transferase</keyword>